<sequence length="105" mass="11529">MQILTGTAKFDNASFQFLHKTIDVFGSVVLVEGCDPTRSITWVHAWTVTDGVITQVREYFNTSLTVTRFGKSDISSITTLHCPSVWESSLPNRVGKSVPGLVLAL</sequence>
<keyword id="KW-1185">Reference proteome</keyword>
<comment type="tissue specificity">
    <text>Ubiquitous.</text>
</comment>
<comment type="developmental stage">
    <text>WUN1 expression may be correlated with cell death as old and dying tissues contain high levels of WUN1 mRNA in the absence of any wounding.</text>
</comment>
<comment type="induction">
    <text>Mechanical wounding induces a rapid increase of this protein. In leaves, this increase is inhibited by the addition of osmotically active agents.</text>
</comment>
<comment type="similarity">
    <text evidence="1">To potato anionic peroxidase.</text>
</comment>
<organism>
    <name type="scientific">Solanum tuberosum</name>
    <name type="common">Potato</name>
    <dbReference type="NCBI Taxonomy" id="4113"/>
    <lineage>
        <taxon>Eukaryota</taxon>
        <taxon>Viridiplantae</taxon>
        <taxon>Streptophyta</taxon>
        <taxon>Embryophyta</taxon>
        <taxon>Tracheophyta</taxon>
        <taxon>Spermatophyta</taxon>
        <taxon>Magnoliopsida</taxon>
        <taxon>eudicotyledons</taxon>
        <taxon>Gunneridae</taxon>
        <taxon>Pentapetalae</taxon>
        <taxon>asterids</taxon>
        <taxon>lamiids</taxon>
        <taxon>Solanales</taxon>
        <taxon>Solanaceae</taxon>
        <taxon>Solanoideae</taxon>
        <taxon>Solaneae</taxon>
        <taxon>Solanum</taxon>
    </lineage>
</organism>
<feature type="chain" id="PRO_0000065985" description="Wound-induced protein 1">
    <location>
        <begin position="1"/>
        <end position="105"/>
    </location>
</feature>
<gene>
    <name type="primary">WUN1</name>
</gene>
<protein>
    <recommendedName>
        <fullName>Wound-induced protein 1</fullName>
    </recommendedName>
</protein>
<dbReference type="EMBL" id="A01609">
    <property type="protein sequence ID" value="CAA00183.1"/>
    <property type="molecule type" value="Unassigned_RNA"/>
</dbReference>
<dbReference type="EMBL" id="A01611">
    <property type="protein sequence ID" value="CAA00184.1"/>
    <property type="molecule type" value="Unassigned_DNA"/>
</dbReference>
<dbReference type="EMBL" id="A12164">
    <property type="protein sequence ID" value="CAA01015.1"/>
    <property type="molecule type" value="Unassigned_DNA"/>
</dbReference>
<dbReference type="EMBL" id="A20297">
    <property type="protein sequence ID" value="CAA01494.1"/>
    <property type="molecule type" value="Unassigned_DNA"/>
</dbReference>
<dbReference type="PIR" id="JQ0398">
    <property type="entry name" value="JQ0398"/>
</dbReference>
<dbReference type="SMR" id="P20144"/>
<dbReference type="FunCoup" id="P20144">
    <property type="interactions" value="309"/>
</dbReference>
<dbReference type="STRING" id="4113.P20144"/>
<dbReference type="PaxDb" id="4113-PGSC0003DMT400017004"/>
<dbReference type="eggNOG" id="ENOG502RYF6">
    <property type="taxonomic scope" value="Eukaryota"/>
</dbReference>
<dbReference type="InParanoid" id="P20144"/>
<dbReference type="Proteomes" id="UP000011115">
    <property type="component" value="Unassembled WGS sequence"/>
</dbReference>
<dbReference type="ExpressionAtlas" id="P20144">
    <property type="expression patterns" value="baseline"/>
</dbReference>
<dbReference type="Gene3D" id="3.10.450.50">
    <property type="match status" value="1"/>
</dbReference>
<dbReference type="InterPro" id="IPR032710">
    <property type="entry name" value="NTF2-like_dom_sf"/>
</dbReference>
<dbReference type="InterPro" id="IPR016533">
    <property type="entry name" value="Wound-induced_1/12_sub"/>
</dbReference>
<dbReference type="InterPro" id="IPR009798">
    <property type="entry name" value="Wun1-like"/>
</dbReference>
<dbReference type="PANTHER" id="PTHR33703">
    <property type="entry name" value="OS07G0691300 PROTEIN"/>
    <property type="match status" value="1"/>
</dbReference>
<dbReference type="PANTHER" id="PTHR33703:SF1">
    <property type="entry name" value="WOUND-INDUCED PROTEIN 1"/>
    <property type="match status" value="1"/>
</dbReference>
<dbReference type="Pfam" id="PF07107">
    <property type="entry name" value="WI12"/>
    <property type="match status" value="1"/>
</dbReference>
<dbReference type="PIRSF" id="PIRSF007948">
    <property type="entry name" value="Wound-induced_Wun1"/>
    <property type="match status" value="1"/>
</dbReference>
<dbReference type="SUPFAM" id="SSF54427">
    <property type="entry name" value="NTF2-like"/>
    <property type="match status" value="1"/>
</dbReference>
<name>WUN1_SOLTU</name>
<accession>P20144</accession>
<reference key="1">
    <citation type="journal article" date="1989" name="Mol. Gen. Genet.">
        <title>Nucleotide sequence and regulated expression of a wound-inducible potato gene (wun1).</title>
        <authorList>
            <person name="Logemann J."/>
            <person name="Schell J."/>
        </authorList>
    </citation>
    <scope>NUCLEOTIDE SEQUENCE</scope>
    <source>
        <strain>cv. Berolina</strain>
    </source>
</reference>
<proteinExistence type="evidence at transcript level"/>
<evidence type="ECO:0000305" key="1"/>